<accession>Q6MRM6</accession>
<reference key="1">
    <citation type="journal article" date="2004" name="Science">
        <title>A predator unmasked: life cycle of Bdellovibrio bacteriovorus from a genomic perspective.</title>
        <authorList>
            <person name="Rendulic S."/>
            <person name="Jagtap P."/>
            <person name="Rosinus A."/>
            <person name="Eppinger M."/>
            <person name="Baar C."/>
            <person name="Lanz C."/>
            <person name="Keller H."/>
            <person name="Lambert C."/>
            <person name="Evans K.J."/>
            <person name="Goesmann A."/>
            <person name="Meyer F."/>
            <person name="Sockett R.E."/>
            <person name="Schuster S.C."/>
        </authorList>
    </citation>
    <scope>NUCLEOTIDE SEQUENCE [LARGE SCALE GENOMIC DNA]</scope>
    <source>
        <strain>ATCC 15356 / DSM 50701 / NCIMB 9529 / HD100</strain>
    </source>
</reference>
<evidence type="ECO:0000255" key="1">
    <source>
        <dbReference type="HAMAP-Rule" id="MF_00494"/>
    </source>
</evidence>
<dbReference type="EC" id="2.2.1.2" evidence="1"/>
<dbReference type="EMBL" id="BX842646">
    <property type="protein sequence ID" value="CAE77731.1"/>
    <property type="molecule type" value="Genomic_DNA"/>
</dbReference>
<dbReference type="RefSeq" id="WP_011162672.1">
    <property type="nucleotide sequence ID" value="NC_005363.1"/>
</dbReference>
<dbReference type="SMR" id="Q6MRM6"/>
<dbReference type="STRING" id="264462.Bd0049"/>
<dbReference type="GeneID" id="93011202"/>
<dbReference type="KEGG" id="bba:Bd0049"/>
<dbReference type="eggNOG" id="COG0176">
    <property type="taxonomic scope" value="Bacteria"/>
</dbReference>
<dbReference type="HOGENOM" id="CLU_079764_0_0_7"/>
<dbReference type="UniPathway" id="UPA00115">
    <property type="reaction ID" value="UER00414"/>
</dbReference>
<dbReference type="Proteomes" id="UP000008080">
    <property type="component" value="Chromosome"/>
</dbReference>
<dbReference type="GO" id="GO:0005737">
    <property type="term" value="C:cytoplasm"/>
    <property type="evidence" value="ECO:0007669"/>
    <property type="project" value="UniProtKB-SubCell"/>
</dbReference>
<dbReference type="GO" id="GO:0016832">
    <property type="term" value="F:aldehyde-lyase activity"/>
    <property type="evidence" value="ECO:0007669"/>
    <property type="project" value="InterPro"/>
</dbReference>
<dbReference type="GO" id="GO:0004801">
    <property type="term" value="F:transaldolase activity"/>
    <property type="evidence" value="ECO:0007669"/>
    <property type="project" value="UniProtKB-UniRule"/>
</dbReference>
<dbReference type="GO" id="GO:0005975">
    <property type="term" value="P:carbohydrate metabolic process"/>
    <property type="evidence" value="ECO:0007669"/>
    <property type="project" value="InterPro"/>
</dbReference>
<dbReference type="GO" id="GO:0006098">
    <property type="term" value="P:pentose-phosphate shunt"/>
    <property type="evidence" value="ECO:0007669"/>
    <property type="project" value="UniProtKB-UniRule"/>
</dbReference>
<dbReference type="CDD" id="cd00956">
    <property type="entry name" value="Transaldolase_FSA"/>
    <property type="match status" value="1"/>
</dbReference>
<dbReference type="FunFam" id="3.20.20.70:FF:000018">
    <property type="entry name" value="Probable transaldolase"/>
    <property type="match status" value="1"/>
</dbReference>
<dbReference type="Gene3D" id="3.20.20.70">
    <property type="entry name" value="Aldolase class I"/>
    <property type="match status" value="1"/>
</dbReference>
<dbReference type="HAMAP" id="MF_00494">
    <property type="entry name" value="Transaldolase_3b"/>
    <property type="match status" value="1"/>
</dbReference>
<dbReference type="InterPro" id="IPR013785">
    <property type="entry name" value="Aldolase_TIM"/>
</dbReference>
<dbReference type="InterPro" id="IPR001585">
    <property type="entry name" value="TAL/FSA"/>
</dbReference>
<dbReference type="InterPro" id="IPR022999">
    <property type="entry name" value="Transaldolase_3B"/>
</dbReference>
<dbReference type="InterPro" id="IPR004731">
    <property type="entry name" value="Transaldolase_3B/F6P_aldolase"/>
</dbReference>
<dbReference type="InterPro" id="IPR018225">
    <property type="entry name" value="Transaldolase_AS"/>
</dbReference>
<dbReference type="InterPro" id="IPR033919">
    <property type="entry name" value="TSA/FSA_arc/bac"/>
</dbReference>
<dbReference type="NCBIfam" id="TIGR00875">
    <property type="entry name" value="fsa_talC_mipB"/>
    <property type="match status" value="1"/>
</dbReference>
<dbReference type="PANTHER" id="PTHR10683:SF40">
    <property type="entry name" value="FRUCTOSE-6-PHOSPHATE ALDOLASE 1-RELATED"/>
    <property type="match status" value="1"/>
</dbReference>
<dbReference type="PANTHER" id="PTHR10683">
    <property type="entry name" value="TRANSALDOLASE"/>
    <property type="match status" value="1"/>
</dbReference>
<dbReference type="Pfam" id="PF00923">
    <property type="entry name" value="TAL_FSA"/>
    <property type="match status" value="1"/>
</dbReference>
<dbReference type="SUPFAM" id="SSF51569">
    <property type="entry name" value="Aldolase"/>
    <property type="match status" value="1"/>
</dbReference>
<dbReference type="PROSITE" id="PS01054">
    <property type="entry name" value="TRANSALDOLASE_1"/>
    <property type="match status" value="1"/>
</dbReference>
<dbReference type="PROSITE" id="PS00958">
    <property type="entry name" value="TRANSALDOLASE_2"/>
    <property type="match status" value="1"/>
</dbReference>
<feature type="chain" id="PRO_1000126283" description="Probable transaldolase">
    <location>
        <begin position="1"/>
        <end position="215"/>
    </location>
</feature>
<feature type="active site" description="Schiff-base intermediate with substrate" evidence="1">
    <location>
        <position position="83"/>
    </location>
</feature>
<sequence>MKFFIDTAEIEEIRQANLRGWVDGVTTNPSLIAKSGKDFHTVIKEICKEITGPVSAEVISLQHEEMVREGKELAKLASNVVVKIPMCEDGMIAVKKLKSEGIKTNVTLVFSPMQALLAAKAGATMVSPFVGRLDDIGVEGMQMVDQVIQMYRNYDFETEVLVASVRSPMHIQLAAEMGADIATIPFKVMQSMTHHPLTDKGIKMFMDDWNKAQKK</sequence>
<name>TAL_BDEBA</name>
<proteinExistence type="inferred from homology"/>
<gene>
    <name evidence="1" type="primary">tal</name>
    <name type="ordered locus">Bd0049</name>
</gene>
<keyword id="KW-0963">Cytoplasm</keyword>
<keyword id="KW-0570">Pentose shunt</keyword>
<keyword id="KW-1185">Reference proteome</keyword>
<keyword id="KW-0704">Schiff base</keyword>
<keyword id="KW-0808">Transferase</keyword>
<protein>
    <recommendedName>
        <fullName evidence="1">Probable transaldolase</fullName>
        <ecNumber evidence="1">2.2.1.2</ecNumber>
    </recommendedName>
</protein>
<organism>
    <name type="scientific">Bdellovibrio bacteriovorus (strain ATCC 15356 / DSM 50701 / NCIMB 9529 / HD100)</name>
    <dbReference type="NCBI Taxonomy" id="264462"/>
    <lineage>
        <taxon>Bacteria</taxon>
        <taxon>Pseudomonadati</taxon>
        <taxon>Bdellovibrionota</taxon>
        <taxon>Bdellovibrionia</taxon>
        <taxon>Bdellovibrionales</taxon>
        <taxon>Pseudobdellovibrionaceae</taxon>
        <taxon>Bdellovibrio</taxon>
    </lineage>
</organism>
<comment type="function">
    <text evidence="1">Transaldolase is important for the balance of metabolites in the pentose-phosphate pathway.</text>
</comment>
<comment type="catalytic activity">
    <reaction evidence="1">
        <text>D-sedoheptulose 7-phosphate + D-glyceraldehyde 3-phosphate = D-erythrose 4-phosphate + beta-D-fructose 6-phosphate</text>
        <dbReference type="Rhea" id="RHEA:17053"/>
        <dbReference type="ChEBI" id="CHEBI:16897"/>
        <dbReference type="ChEBI" id="CHEBI:57483"/>
        <dbReference type="ChEBI" id="CHEBI:57634"/>
        <dbReference type="ChEBI" id="CHEBI:59776"/>
        <dbReference type="EC" id="2.2.1.2"/>
    </reaction>
</comment>
<comment type="pathway">
    <text evidence="1">Carbohydrate degradation; pentose phosphate pathway; D-glyceraldehyde 3-phosphate and beta-D-fructose 6-phosphate from D-ribose 5-phosphate and D-xylulose 5-phosphate (non-oxidative stage): step 2/3.</text>
</comment>
<comment type="subcellular location">
    <subcellularLocation>
        <location evidence="1">Cytoplasm</location>
    </subcellularLocation>
</comment>
<comment type="similarity">
    <text evidence="1">Belongs to the transaldolase family. Type 3B subfamily.</text>
</comment>